<accession>Q70Y02</accession>
<dbReference type="EMBL" id="AJ506156">
    <property type="protein sequence ID" value="CAD45108.1"/>
    <property type="molecule type" value="Genomic_DNA"/>
</dbReference>
<dbReference type="RefSeq" id="NP_904100.1">
    <property type="nucleotide sequence ID" value="NC_005086.1"/>
</dbReference>
<dbReference type="SMR" id="Q70Y02"/>
<dbReference type="STRING" id="13333.Q70Y02"/>
<dbReference type="GeneID" id="2546551"/>
<dbReference type="KEGG" id="atr:2546551"/>
<dbReference type="eggNOG" id="KOG1124">
    <property type="taxonomic scope" value="Eukaryota"/>
</dbReference>
<dbReference type="OrthoDB" id="431027at2759"/>
<dbReference type="Proteomes" id="UP000017836">
    <property type="component" value="Chloroplast"/>
</dbReference>
<dbReference type="GO" id="GO:0009535">
    <property type="term" value="C:chloroplast thylakoid membrane"/>
    <property type="evidence" value="ECO:0007669"/>
    <property type="project" value="UniProtKB-SubCell"/>
</dbReference>
<dbReference type="GO" id="GO:0048564">
    <property type="term" value="P:photosystem I assembly"/>
    <property type="evidence" value="ECO:0000318"/>
    <property type="project" value="GO_Central"/>
</dbReference>
<dbReference type="FunFam" id="1.25.40.10:FF:000004">
    <property type="entry name" value="Photosystem I assembly protein Ycf3"/>
    <property type="match status" value="1"/>
</dbReference>
<dbReference type="Gene3D" id="1.25.40.10">
    <property type="entry name" value="Tetratricopeptide repeat domain"/>
    <property type="match status" value="1"/>
</dbReference>
<dbReference type="HAMAP" id="MF_00439">
    <property type="entry name" value="Ycf3"/>
    <property type="match status" value="1"/>
</dbReference>
<dbReference type="InterPro" id="IPR022818">
    <property type="entry name" value="PSI_Ycf3_assembly"/>
</dbReference>
<dbReference type="InterPro" id="IPR011990">
    <property type="entry name" value="TPR-like_helical_dom_sf"/>
</dbReference>
<dbReference type="InterPro" id="IPR019734">
    <property type="entry name" value="TPR_rpt"/>
</dbReference>
<dbReference type="InterPro" id="IPR051685">
    <property type="entry name" value="Ycf3/AcsC/BcsC/TPR_MFPF"/>
</dbReference>
<dbReference type="NCBIfam" id="NF002725">
    <property type="entry name" value="PRK02603.1"/>
    <property type="match status" value="1"/>
</dbReference>
<dbReference type="PANTHER" id="PTHR44943">
    <property type="entry name" value="CELLULOSE SYNTHASE OPERON PROTEIN C"/>
    <property type="match status" value="1"/>
</dbReference>
<dbReference type="PANTHER" id="PTHR44943:SF8">
    <property type="entry name" value="TPR REPEAT-CONTAINING PROTEIN MJ0263"/>
    <property type="match status" value="1"/>
</dbReference>
<dbReference type="Pfam" id="PF00515">
    <property type="entry name" value="TPR_1"/>
    <property type="match status" value="1"/>
</dbReference>
<dbReference type="SMART" id="SM00028">
    <property type="entry name" value="TPR"/>
    <property type="match status" value="3"/>
</dbReference>
<dbReference type="SUPFAM" id="SSF48452">
    <property type="entry name" value="TPR-like"/>
    <property type="match status" value="1"/>
</dbReference>
<dbReference type="PROSITE" id="PS50005">
    <property type="entry name" value="TPR"/>
    <property type="match status" value="3"/>
</dbReference>
<dbReference type="PROSITE" id="PS50293">
    <property type="entry name" value="TPR_REGION"/>
    <property type="match status" value="1"/>
</dbReference>
<organism>
    <name type="scientific">Amborella trichopoda</name>
    <dbReference type="NCBI Taxonomy" id="13333"/>
    <lineage>
        <taxon>Eukaryota</taxon>
        <taxon>Viridiplantae</taxon>
        <taxon>Streptophyta</taxon>
        <taxon>Embryophyta</taxon>
        <taxon>Tracheophyta</taxon>
        <taxon>Spermatophyta</taxon>
        <taxon>Magnoliopsida</taxon>
        <taxon>Amborellales</taxon>
        <taxon>Amborellaceae</taxon>
        <taxon>Amborella</taxon>
    </lineage>
</organism>
<evidence type="ECO:0000255" key="1">
    <source>
        <dbReference type="HAMAP-Rule" id="MF_00439"/>
    </source>
</evidence>
<reference key="1">
    <citation type="journal article" date="2003" name="Mol. Biol. Evol.">
        <title>Analysis of the Amborella trichopoda chloroplast genome sequence suggests that Amborella is not a basal angiosperm.</title>
        <authorList>
            <person name="Goremykin V.V."/>
            <person name="Hirsch-Ernst K.I."/>
            <person name="Wolfl S."/>
            <person name="Hellwig F.H."/>
        </authorList>
    </citation>
    <scope>NUCLEOTIDE SEQUENCE [LARGE SCALE GENOMIC DNA]</scope>
</reference>
<sequence length="168" mass="19390">MPRSRINGNFIDKTSSIVANILLRIIPTTSGEKEAFTYYRDGMSAQSEGNYAEALQNYYEATRPEIDPYDRSYILYNIGLIHTSNGEHTKALEYYFRALERNPFLPQASNNMAVICHYRGEQAIRQGDSEIAETWSDQAAEYWKQAIALTPGNYIEAQNWLKITRRFE</sequence>
<comment type="function">
    <text evidence="1">Essential for the assembly of the photosystem I (PSI) complex. May act as a chaperone-like factor to guide the assembly of the PSI subunits.</text>
</comment>
<comment type="subcellular location">
    <subcellularLocation>
        <location evidence="1">Plastid</location>
        <location evidence="1">Chloroplast thylakoid membrane</location>
        <topology evidence="1">Peripheral membrane protein</topology>
    </subcellularLocation>
</comment>
<comment type="similarity">
    <text evidence="1">Belongs to the Ycf3 family.</text>
</comment>
<feature type="chain" id="PRO_0000217790" description="Photosystem I assembly protein Ycf3">
    <location>
        <begin position="1"/>
        <end position="168"/>
    </location>
</feature>
<feature type="repeat" description="TPR 1">
    <location>
        <begin position="35"/>
        <end position="68"/>
    </location>
</feature>
<feature type="repeat" description="TPR 2">
    <location>
        <begin position="72"/>
        <end position="105"/>
    </location>
</feature>
<feature type="repeat" description="TPR 3">
    <location>
        <begin position="120"/>
        <end position="153"/>
    </location>
</feature>
<protein>
    <recommendedName>
        <fullName evidence="1">Photosystem I assembly protein Ycf3</fullName>
    </recommendedName>
</protein>
<gene>
    <name evidence="1" type="primary">ycf3</name>
</gene>
<geneLocation type="chloroplast"/>
<name>YCF3_AMBTC</name>
<keyword id="KW-0150">Chloroplast</keyword>
<keyword id="KW-0472">Membrane</keyword>
<keyword id="KW-0602">Photosynthesis</keyword>
<keyword id="KW-0934">Plastid</keyword>
<keyword id="KW-1185">Reference proteome</keyword>
<keyword id="KW-0677">Repeat</keyword>
<keyword id="KW-0793">Thylakoid</keyword>
<keyword id="KW-0802">TPR repeat</keyword>
<proteinExistence type="inferred from homology"/>